<name>M3K3_ARATH</name>
<keyword id="KW-0067">ATP-binding</keyword>
<keyword id="KW-0175">Coiled coil</keyword>
<keyword id="KW-0963">Cytoplasm</keyword>
<keyword id="KW-0206">Cytoskeleton</keyword>
<keyword id="KW-1017">Isopeptide bond</keyword>
<keyword id="KW-0418">Kinase</keyword>
<keyword id="KW-0493">Microtubule</keyword>
<keyword id="KW-0547">Nucleotide-binding</keyword>
<keyword id="KW-1185">Reference proteome</keyword>
<keyword id="KW-0723">Serine/threonine-protein kinase</keyword>
<keyword id="KW-0808">Transferase</keyword>
<keyword id="KW-0832">Ubl conjugation</keyword>
<dbReference type="EC" id="2.7.11.25"/>
<dbReference type="EMBL" id="AB000799">
    <property type="protein sequence ID" value="BAA21857.1"/>
    <property type="molecule type" value="mRNA"/>
</dbReference>
<dbReference type="EMBL" id="AC013454">
    <property type="protein sequence ID" value="AAF23214.1"/>
    <property type="molecule type" value="Genomic_DNA"/>
</dbReference>
<dbReference type="EMBL" id="AC068073">
    <property type="protein sequence ID" value="AAF66131.1"/>
    <property type="molecule type" value="Genomic_DNA"/>
</dbReference>
<dbReference type="EMBL" id="CP002686">
    <property type="protein sequence ID" value="AEE74332.1"/>
    <property type="molecule type" value="Genomic_DNA"/>
</dbReference>
<dbReference type="EMBL" id="AY069917">
    <property type="protein sequence ID" value="AAL47465.1"/>
    <property type="molecule type" value="mRNA"/>
</dbReference>
<dbReference type="EMBL" id="BT001024">
    <property type="protein sequence ID" value="AAN46778.1"/>
    <property type="molecule type" value="mRNA"/>
</dbReference>
<dbReference type="RefSeq" id="NP_187254.1">
    <property type="nucleotide sequence ID" value="NM_111477.4"/>
</dbReference>
<dbReference type="SMR" id="O22042"/>
<dbReference type="BioGRID" id="5109">
    <property type="interactions" value="4"/>
</dbReference>
<dbReference type="FunCoup" id="O22042">
    <property type="interactions" value="513"/>
</dbReference>
<dbReference type="IntAct" id="O22042">
    <property type="interactions" value="2"/>
</dbReference>
<dbReference type="STRING" id="3702.O22042"/>
<dbReference type="iPTMnet" id="O22042"/>
<dbReference type="PaxDb" id="3702-AT3G06030.1"/>
<dbReference type="ProteomicsDB" id="250819"/>
<dbReference type="EnsemblPlants" id="AT3G06030.1">
    <property type="protein sequence ID" value="AT3G06030.1"/>
    <property type="gene ID" value="AT3G06030"/>
</dbReference>
<dbReference type="GeneID" id="819774"/>
<dbReference type="Gramene" id="AT3G06030.1">
    <property type="protein sequence ID" value="AT3G06030.1"/>
    <property type="gene ID" value="AT3G06030"/>
</dbReference>
<dbReference type="KEGG" id="ath:AT3G06030"/>
<dbReference type="Araport" id="AT3G06030"/>
<dbReference type="TAIR" id="AT3G06030">
    <property type="gene designation" value="NP3"/>
</dbReference>
<dbReference type="eggNOG" id="KOG0198">
    <property type="taxonomic scope" value="Eukaryota"/>
</dbReference>
<dbReference type="HOGENOM" id="CLU_020952_1_0_1"/>
<dbReference type="InParanoid" id="O22042"/>
<dbReference type="OMA" id="GEYNETH"/>
<dbReference type="PhylomeDB" id="O22042"/>
<dbReference type="PRO" id="PR:O22042"/>
<dbReference type="Proteomes" id="UP000006548">
    <property type="component" value="Chromosome 3"/>
</dbReference>
<dbReference type="ExpressionAtlas" id="O22042">
    <property type="expression patterns" value="baseline and differential"/>
</dbReference>
<dbReference type="GO" id="GO:0048046">
    <property type="term" value="C:apoplast"/>
    <property type="evidence" value="ECO:0007005"/>
    <property type="project" value="TAIR"/>
</dbReference>
<dbReference type="GO" id="GO:0005737">
    <property type="term" value="C:cytoplasm"/>
    <property type="evidence" value="ECO:0007669"/>
    <property type="project" value="UniProtKB-KW"/>
</dbReference>
<dbReference type="GO" id="GO:0005874">
    <property type="term" value="C:microtubule"/>
    <property type="evidence" value="ECO:0007669"/>
    <property type="project" value="UniProtKB-KW"/>
</dbReference>
<dbReference type="GO" id="GO:0005524">
    <property type="term" value="F:ATP binding"/>
    <property type="evidence" value="ECO:0007669"/>
    <property type="project" value="UniProtKB-KW"/>
</dbReference>
<dbReference type="GO" id="GO:0004709">
    <property type="term" value="F:MAP kinase kinase kinase activity"/>
    <property type="evidence" value="ECO:0007669"/>
    <property type="project" value="UniProtKB-EC"/>
</dbReference>
<dbReference type="GO" id="GO:0106310">
    <property type="term" value="F:protein serine kinase activity"/>
    <property type="evidence" value="ECO:0007669"/>
    <property type="project" value="RHEA"/>
</dbReference>
<dbReference type="GO" id="GO:0004674">
    <property type="term" value="F:protein serine/threonine kinase activity"/>
    <property type="evidence" value="ECO:0007005"/>
    <property type="project" value="TAIR"/>
</dbReference>
<dbReference type="GO" id="GO:0043622">
    <property type="term" value="P:cortical microtubule organization"/>
    <property type="evidence" value="ECO:0000315"/>
    <property type="project" value="UniProtKB"/>
</dbReference>
<dbReference type="GO" id="GO:0046777">
    <property type="term" value="P:protein autophosphorylation"/>
    <property type="evidence" value="ECO:0007005"/>
    <property type="project" value="TAIR"/>
</dbReference>
<dbReference type="CDD" id="cd06606">
    <property type="entry name" value="STKc_MAPKKK"/>
    <property type="match status" value="1"/>
</dbReference>
<dbReference type="FunFam" id="1.10.510.10:FF:000382">
    <property type="entry name" value="Mitogen-activated protein kinase kinase kinase 2"/>
    <property type="match status" value="1"/>
</dbReference>
<dbReference type="FunFam" id="3.30.200.20:FF:000387">
    <property type="entry name" value="Serine/threonine-protein kinase STE11"/>
    <property type="match status" value="1"/>
</dbReference>
<dbReference type="Gene3D" id="1.10.510.10">
    <property type="entry name" value="Transferase(Phosphotransferase) domain 1"/>
    <property type="match status" value="1"/>
</dbReference>
<dbReference type="InterPro" id="IPR011009">
    <property type="entry name" value="Kinase-like_dom_sf"/>
</dbReference>
<dbReference type="InterPro" id="IPR050538">
    <property type="entry name" value="MAP_kinase_kinase_kinase"/>
</dbReference>
<dbReference type="InterPro" id="IPR000719">
    <property type="entry name" value="Prot_kinase_dom"/>
</dbReference>
<dbReference type="InterPro" id="IPR017441">
    <property type="entry name" value="Protein_kinase_ATP_BS"/>
</dbReference>
<dbReference type="InterPro" id="IPR008271">
    <property type="entry name" value="Ser/Thr_kinase_AS"/>
</dbReference>
<dbReference type="PANTHER" id="PTHR48016">
    <property type="entry name" value="MAP KINASE KINASE KINASE SSK2-RELATED-RELATED"/>
    <property type="match status" value="1"/>
</dbReference>
<dbReference type="PANTHER" id="PTHR48016:SF56">
    <property type="entry name" value="MAPKK KINASE"/>
    <property type="match status" value="1"/>
</dbReference>
<dbReference type="Pfam" id="PF00069">
    <property type="entry name" value="Pkinase"/>
    <property type="match status" value="1"/>
</dbReference>
<dbReference type="SMART" id="SM00220">
    <property type="entry name" value="S_TKc"/>
    <property type="match status" value="1"/>
</dbReference>
<dbReference type="SUPFAM" id="SSF56112">
    <property type="entry name" value="Protein kinase-like (PK-like)"/>
    <property type="match status" value="1"/>
</dbReference>
<dbReference type="PROSITE" id="PS00107">
    <property type="entry name" value="PROTEIN_KINASE_ATP"/>
    <property type="match status" value="1"/>
</dbReference>
<dbReference type="PROSITE" id="PS50011">
    <property type="entry name" value="PROTEIN_KINASE_DOM"/>
    <property type="match status" value="1"/>
</dbReference>
<dbReference type="PROSITE" id="PS00108">
    <property type="entry name" value="PROTEIN_KINASE_ST"/>
    <property type="match status" value="1"/>
</dbReference>
<accession>O22042</accession>
<accession>Q9SFG7</accession>
<organism>
    <name type="scientific">Arabidopsis thaliana</name>
    <name type="common">Mouse-ear cress</name>
    <dbReference type="NCBI Taxonomy" id="3702"/>
    <lineage>
        <taxon>Eukaryota</taxon>
        <taxon>Viridiplantae</taxon>
        <taxon>Streptophyta</taxon>
        <taxon>Embryophyta</taxon>
        <taxon>Tracheophyta</taxon>
        <taxon>Spermatophyta</taxon>
        <taxon>Magnoliopsida</taxon>
        <taxon>eudicotyledons</taxon>
        <taxon>Gunneridae</taxon>
        <taxon>Pentapetalae</taxon>
        <taxon>rosids</taxon>
        <taxon>malvids</taxon>
        <taxon>Brassicales</taxon>
        <taxon>Brassicaceae</taxon>
        <taxon>Camelineae</taxon>
        <taxon>Arabidopsis</taxon>
    </lineage>
</organism>
<sequence length="651" mass="71654">MQDILGSVRRSLVFRSSLAGDDGTSGGGLSGFVGKINSSIRSSRIGLFSKPPPGLPAPRKEEAPSIRWRKGELIGCGAFGRVYMGMNLDSGELLAIKQVLIAPSSASKEKTQGHIRELEEEVQLLKNLSHPNIVRYLGTVRESDSLNILMEFVPGGSISSLLEKFGSFPEPVIIMYTKQLLLGLEYLHNNGIMHRDIKGANILVDNKGCIRLADFGASKKVVELATVNGAKSMKGTPYWMAPEVILQTGHSFSADIWSVGCTVIEMATGKPPWSEQYQQFAAVLHIGRTKAHPPIPEDLSPEAKDFLMKCLHKEPSLRLSATELLQHPFVTGKRQEPYPAYRNSLTECGNPITTQGMNVRSSINSLIRRSTCSGLKDVCELGSLRSSIIYPQKSNNSGFGWRDGDSDDLCQTDMDDLCNIESVRNNVLSQSTDLNKSFNPMCDSTDNWSCKFDESPKVMKSKSNLLSYQASQLQTGVPCDEETSLTFAGGSSVAEDDYKGTELKIKSFLDEKAQDLKRLQTPLLEEFHNAMNPGIPQGALGDTNIYNLPNLPSISKTPKRLPSRRLSAISDAMPSPLKSSKRTLNTSRVMQSGTEPTQVNESTKKGVNNSRCFSEIRRKWEEELYEELERHRENLRHAGAGGKTPLSGHKG</sequence>
<protein>
    <recommendedName>
        <fullName>Mitogen-activated protein kinase kinase kinase 3</fullName>
        <ecNumber>2.7.11.25</ecNumber>
    </recommendedName>
    <alternativeName>
        <fullName>Arabidopsis NPK1-related protein kinase 3</fullName>
    </alternativeName>
</protein>
<comment type="function">
    <text evidence="5">Involved in cortical microtubules organization and stabilization by regulating the phosphorylation state of microtubule-associated proteins such as MAP65-1.</text>
</comment>
<comment type="catalytic activity">
    <reaction>
        <text>L-seryl-[protein] + ATP = O-phospho-L-seryl-[protein] + ADP + H(+)</text>
        <dbReference type="Rhea" id="RHEA:17989"/>
        <dbReference type="Rhea" id="RHEA-COMP:9863"/>
        <dbReference type="Rhea" id="RHEA-COMP:11604"/>
        <dbReference type="ChEBI" id="CHEBI:15378"/>
        <dbReference type="ChEBI" id="CHEBI:29999"/>
        <dbReference type="ChEBI" id="CHEBI:30616"/>
        <dbReference type="ChEBI" id="CHEBI:83421"/>
        <dbReference type="ChEBI" id="CHEBI:456216"/>
        <dbReference type="EC" id="2.7.11.25"/>
    </reaction>
</comment>
<comment type="catalytic activity">
    <reaction>
        <text>L-threonyl-[protein] + ATP = O-phospho-L-threonyl-[protein] + ADP + H(+)</text>
        <dbReference type="Rhea" id="RHEA:46608"/>
        <dbReference type="Rhea" id="RHEA-COMP:11060"/>
        <dbReference type="Rhea" id="RHEA-COMP:11605"/>
        <dbReference type="ChEBI" id="CHEBI:15378"/>
        <dbReference type="ChEBI" id="CHEBI:30013"/>
        <dbReference type="ChEBI" id="CHEBI:30616"/>
        <dbReference type="ChEBI" id="CHEBI:61977"/>
        <dbReference type="ChEBI" id="CHEBI:456216"/>
        <dbReference type="EC" id="2.7.11.25"/>
    </reaction>
</comment>
<comment type="subunit">
    <text evidence="6">Interacts with NACK2 and MKK6.</text>
</comment>
<comment type="subcellular location">
    <subcellularLocation>
        <location evidence="8">Cytoplasm</location>
        <location evidence="8">Cytoskeleton</location>
    </subcellularLocation>
</comment>
<comment type="tissue specificity">
    <text evidence="7">Expressed in roots and flowers.</text>
</comment>
<comment type="similarity">
    <text evidence="8">Belongs to the protein kinase superfamily. STE Ser/Thr protein kinase family. MAP kinase kinase kinase subfamily.</text>
</comment>
<proteinExistence type="evidence at protein level"/>
<feature type="chain" id="PRO_0000086272" description="Mitogen-activated protein kinase kinase kinase 3">
    <location>
        <begin position="1"/>
        <end position="651"/>
    </location>
</feature>
<feature type="domain" description="Protein kinase" evidence="2">
    <location>
        <begin position="68"/>
        <end position="330"/>
    </location>
</feature>
<feature type="region of interest" description="Disordered" evidence="4">
    <location>
        <begin position="573"/>
        <end position="608"/>
    </location>
</feature>
<feature type="coiled-coil region" evidence="1">
    <location>
        <begin position="105"/>
        <end position="130"/>
    </location>
</feature>
<feature type="coiled-coil region" evidence="1">
    <location>
        <begin position="618"/>
        <end position="641"/>
    </location>
</feature>
<feature type="compositionally biased region" description="Polar residues" evidence="4">
    <location>
        <begin position="582"/>
        <end position="608"/>
    </location>
</feature>
<feature type="active site" description="Proton acceptor" evidence="2 3">
    <location>
        <position position="196"/>
    </location>
</feature>
<feature type="binding site" evidence="2">
    <location>
        <begin position="74"/>
        <end position="82"/>
    </location>
    <ligand>
        <name>ATP</name>
        <dbReference type="ChEBI" id="CHEBI:30616"/>
    </ligand>
</feature>
<feature type="binding site" evidence="2">
    <location>
        <position position="97"/>
    </location>
    <ligand>
        <name>ATP</name>
        <dbReference type="ChEBI" id="CHEBI:30616"/>
    </ligand>
</feature>
<feature type="cross-link" description="Glycyl lysine isopeptide (Lys-Gly) (interchain with G-Cter in ubiquitin)" evidence="9">
    <location>
        <position position="108"/>
    </location>
</feature>
<feature type="cross-link" description="Glycyl lysine isopeptide (Lys-Gly) (interchain with G-Cter in ubiquitin)" evidence="9">
    <location>
        <position position="110"/>
    </location>
</feature>
<reference key="1">
    <citation type="journal article" date="1997" name="Plant J.">
        <title>Possible involvement of differential splicing in regulation of the activity of Arabidopsis ANP1 that is related to mitogen-activated protein kinase kinase kinases (MAPKKKs).</title>
        <authorList>
            <person name="Nishihama R."/>
            <person name="Banno H."/>
            <person name="Kawahara E."/>
            <person name="Irie K."/>
            <person name="Machida Y."/>
        </authorList>
    </citation>
    <scope>NUCLEOTIDE SEQUENCE [MRNA]</scope>
    <scope>TISSUE SPECIFICITY</scope>
    <source>
        <strain>cv. Columbia</strain>
    </source>
</reference>
<reference key="2">
    <citation type="journal article" date="2000" name="Nature">
        <title>Sequence and analysis of chromosome 3 of the plant Arabidopsis thaliana.</title>
        <authorList>
            <person name="Salanoubat M."/>
            <person name="Lemcke K."/>
            <person name="Rieger M."/>
            <person name="Ansorge W."/>
            <person name="Unseld M."/>
            <person name="Fartmann B."/>
            <person name="Valle G."/>
            <person name="Bloecker H."/>
            <person name="Perez-Alonso M."/>
            <person name="Obermaier B."/>
            <person name="Delseny M."/>
            <person name="Boutry M."/>
            <person name="Grivell L.A."/>
            <person name="Mache R."/>
            <person name="Puigdomenech P."/>
            <person name="De Simone V."/>
            <person name="Choisne N."/>
            <person name="Artiguenave F."/>
            <person name="Robert C."/>
            <person name="Brottier P."/>
            <person name="Wincker P."/>
            <person name="Cattolico L."/>
            <person name="Weissenbach J."/>
            <person name="Saurin W."/>
            <person name="Quetier F."/>
            <person name="Schaefer M."/>
            <person name="Mueller-Auer S."/>
            <person name="Gabel C."/>
            <person name="Fuchs M."/>
            <person name="Benes V."/>
            <person name="Wurmbach E."/>
            <person name="Drzonek H."/>
            <person name="Erfle H."/>
            <person name="Jordan N."/>
            <person name="Bangert S."/>
            <person name="Wiedelmann R."/>
            <person name="Kranz H."/>
            <person name="Voss H."/>
            <person name="Holland R."/>
            <person name="Brandt P."/>
            <person name="Nyakatura G."/>
            <person name="Vezzi A."/>
            <person name="D'Angelo M."/>
            <person name="Pallavicini A."/>
            <person name="Toppo S."/>
            <person name="Simionati B."/>
            <person name="Conrad A."/>
            <person name="Hornischer K."/>
            <person name="Kauer G."/>
            <person name="Loehnert T.-H."/>
            <person name="Nordsiek G."/>
            <person name="Reichelt J."/>
            <person name="Scharfe M."/>
            <person name="Schoen O."/>
            <person name="Bargues M."/>
            <person name="Terol J."/>
            <person name="Climent J."/>
            <person name="Navarro P."/>
            <person name="Collado C."/>
            <person name="Perez-Perez A."/>
            <person name="Ottenwaelder B."/>
            <person name="Duchemin D."/>
            <person name="Cooke R."/>
            <person name="Laudie M."/>
            <person name="Berger-Llauro C."/>
            <person name="Purnelle B."/>
            <person name="Masuy D."/>
            <person name="de Haan M."/>
            <person name="Maarse A.C."/>
            <person name="Alcaraz J.-P."/>
            <person name="Cottet A."/>
            <person name="Casacuberta E."/>
            <person name="Monfort A."/>
            <person name="Argiriou A."/>
            <person name="Flores M."/>
            <person name="Liguori R."/>
            <person name="Vitale D."/>
            <person name="Mannhaupt G."/>
            <person name="Haase D."/>
            <person name="Schoof H."/>
            <person name="Rudd S."/>
            <person name="Zaccaria P."/>
            <person name="Mewes H.-W."/>
            <person name="Mayer K.F.X."/>
            <person name="Kaul S."/>
            <person name="Town C.D."/>
            <person name="Koo H.L."/>
            <person name="Tallon L.J."/>
            <person name="Jenkins J."/>
            <person name="Rooney T."/>
            <person name="Rizzo M."/>
            <person name="Walts A."/>
            <person name="Utterback T."/>
            <person name="Fujii C.Y."/>
            <person name="Shea T.P."/>
            <person name="Creasy T.H."/>
            <person name="Haas B."/>
            <person name="Maiti R."/>
            <person name="Wu D."/>
            <person name="Peterson J."/>
            <person name="Van Aken S."/>
            <person name="Pai G."/>
            <person name="Militscher J."/>
            <person name="Sellers P."/>
            <person name="Gill J.E."/>
            <person name="Feldblyum T.V."/>
            <person name="Preuss D."/>
            <person name="Lin X."/>
            <person name="Nierman W.C."/>
            <person name="Salzberg S.L."/>
            <person name="White O."/>
            <person name="Venter J.C."/>
            <person name="Fraser C.M."/>
            <person name="Kaneko T."/>
            <person name="Nakamura Y."/>
            <person name="Sato S."/>
            <person name="Kato T."/>
            <person name="Asamizu E."/>
            <person name="Sasamoto S."/>
            <person name="Kimura T."/>
            <person name="Idesawa K."/>
            <person name="Kawashima K."/>
            <person name="Kishida Y."/>
            <person name="Kiyokawa C."/>
            <person name="Kohara M."/>
            <person name="Matsumoto M."/>
            <person name="Matsuno A."/>
            <person name="Muraki A."/>
            <person name="Nakayama S."/>
            <person name="Nakazaki N."/>
            <person name="Shinpo S."/>
            <person name="Takeuchi C."/>
            <person name="Wada T."/>
            <person name="Watanabe A."/>
            <person name="Yamada M."/>
            <person name="Yasuda M."/>
            <person name="Tabata S."/>
        </authorList>
    </citation>
    <scope>NUCLEOTIDE SEQUENCE [LARGE SCALE GENOMIC DNA]</scope>
    <source>
        <strain>cv. Columbia</strain>
    </source>
</reference>
<reference key="3">
    <citation type="journal article" date="2017" name="Plant J.">
        <title>Araport11: a complete reannotation of the Arabidopsis thaliana reference genome.</title>
        <authorList>
            <person name="Cheng C.Y."/>
            <person name="Krishnakumar V."/>
            <person name="Chan A.P."/>
            <person name="Thibaud-Nissen F."/>
            <person name="Schobel S."/>
            <person name="Town C.D."/>
        </authorList>
    </citation>
    <scope>GENOME REANNOTATION</scope>
    <source>
        <strain>cv. Columbia</strain>
    </source>
</reference>
<reference key="4">
    <citation type="journal article" date="2003" name="Science">
        <title>Empirical analysis of transcriptional activity in the Arabidopsis genome.</title>
        <authorList>
            <person name="Yamada K."/>
            <person name="Lim J."/>
            <person name="Dale J.M."/>
            <person name="Chen H."/>
            <person name="Shinn P."/>
            <person name="Palm C.J."/>
            <person name="Southwick A.M."/>
            <person name="Wu H.C."/>
            <person name="Kim C.J."/>
            <person name="Nguyen M."/>
            <person name="Pham P.K."/>
            <person name="Cheuk R.F."/>
            <person name="Karlin-Newmann G."/>
            <person name="Liu S.X."/>
            <person name="Lam B."/>
            <person name="Sakano H."/>
            <person name="Wu T."/>
            <person name="Yu G."/>
            <person name="Miranda M."/>
            <person name="Quach H.L."/>
            <person name="Tripp M."/>
            <person name="Chang C.H."/>
            <person name="Lee J.M."/>
            <person name="Toriumi M.J."/>
            <person name="Chan M.M."/>
            <person name="Tang C.C."/>
            <person name="Onodera C.S."/>
            <person name="Deng J.M."/>
            <person name="Akiyama K."/>
            <person name="Ansari Y."/>
            <person name="Arakawa T."/>
            <person name="Banh J."/>
            <person name="Banno F."/>
            <person name="Bowser L."/>
            <person name="Brooks S.Y."/>
            <person name="Carninci P."/>
            <person name="Chao Q."/>
            <person name="Choy N."/>
            <person name="Enju A."/>
            <person name="Goldsmith A.D."/>
            <person name="Gurjal M."/>
            <person name="Hansen N.F."/>
            <person name="Hayashizaki Y."/>
            <person name="Johnson-Hopson C."/>
            <person name="Hsuan V.W."/>
            <person name="Iida K."/>
            <person name="Karnes M."/>
            <person name="Khan S."/>
            <person name="Koesema E."/>
            <person name="Ishida J."/>
            <person name="Jiang P.X."/>
            <person name="Jones T."/>
            <person name="Kawai J."/>
            <person name="Kamiya A."/>
            <person name="Meyers C."/>
            <person name="Nakajima M."/>
            <person name="Narusaka M."/>
            <person name="Seki M."/>
            <person name="Sakurai T."/>
            <person name="Satou M."/>
            <person name="Tamse R."/>
            <person name="Vaysberg M."/>
            <person name="Wallender E.K."/>
            <person name="Wong C."/>
            <person name="Yamamura Y."/>
            <person name="Yuan S."/>
            <person name="Shinozaki K."/>
            <person name="Davis R.W."/>
            <person name="Theologis A."/>
            <person name="Ecker J.R."/>
        </authorList>
    </citation>
    <scope>NUCLEOTIDE SEQUENCE [LARGE SCALE MRNA]</scope>
    <source>
        <strain>cv. Columbia</strain>
    </source>
</reference>
<reference key="5">
    <citation type="journal article" date="2007" name="Mol. Cell. Proteomics">
        <title>Multidimensional protein identification technology (MudPIT) analysis of ubiquitinated proteins in plants.</title>
        <authorList>
            <person name="Maor R."/>
            <person name="Jones A."/>
            <person name="Nuehse T.S."/>
            <person name="Studholme D.J."/>
            <person name="Peck S.C."/>
            <person name="Shirasu K."/>
        </authorList>
    </citation>
    <scope>UBIQUITINATION [LARGE SCALE ANALYSIS] AT LYS-108 AND LYS-110</scope>
    <scope>IDENTIFICATION BY MASS SPECTROMETRY [LARGE SCALE ANALYSIS]</scope>
    <source>
        <strain>cv. Landsberg erecta</strain>
    </source>
</reference>
<reference key="6">
    <citation type="journal article" date="2010" name="Plant Cell">
        <title>Arabidopsis homologs of nucleus- and phragmoplast-localized kinase 2 and 3 and mitogen-activated protein kinase 4 are essential for microtubule organization.</title>
        <authorList>
            <person name="Beck M."/>
            <person name="Komis G."/>
            <person name="Mueller J."/>
            <person name="Menzel D."/>
            <person name="Samaj J."/>
        </authorList>
    </citation>
    <scope>FUNCTION</scope>
</reference>
<reference key="7">
    <citation type="journal article" date="2011" name="Plant J.">
        <title>AtMPK4 is required for male-specific meiotic cytokinesis in Arabidopsis.</title>
        <authorList>
            <person name="Zeng Q."/>
            <person name="Chen J.G."/>
            <person name="Ellis B.E."/>
        </authorList>
    </citation>
    <scope>INTERACTION WITH NACK2 AND MKK6</scope>
</reference>
<evidence type="ECO:0000255" key="1"/>
<evidence type="ECO:0000255" key="2">
    <source>
        <dbReference type="PROSITE-ProRule" id="PRU00159"/>
    </source>
</evidence>
<evidence type="ECO:0000255" key="3">
    <source>
        <dbReference type="PROSITE-ProRule" id="PRU10027"/>
    </source>
</evidence>
<evidence type="ECO:0000256" key="4">
    <source>
        <dbReference type="SAM" id="MobiDB-lite"/>
    </source>
</evidence>
<evidence type="ECO:0000269" key="5">
    <source>
    </source>
</evidence>
<evidence type="ECO:0000269" key="6">
    <source>
    </source>
</evidence>
<evidence type="ECO:0000269" key="7">
    <source>
    </source>
</evidence>
<evidence type="ECO:0000305" key="8"/>
<evidence type="ECO:0007744" key="9">
    <source>
    </source>
</evidence>
<gene>
    <name type="primary">ANP3</name>
    <name type="ordered locus">At3g06030</name>
    <name type="ORF">F24F17.1</name>
    <name type="ORF">F2O10.1</name>
</gene>